<name>H13J1_CYRHA</name>
<organism>
    <name type="scientific">Cyriopagopus hainanus</name>
    <name type="common">Chinese bird spider</name>
    <name type="synonym">Haplopelma hainanum</name>
    <dbReference type="NCBI Taxonomy" id="209901"/>
    <lineage>
        <taxon>Eukaryota</taxon>
        <taxon>Metazoa</taxon>
        <taxon>Ecdysozoa</taxon>
        <taxon>Arthropoda</taxon>
        <taxon>Chelicerata</taxon>
        <taxon>Arachnida</taxon>
        <taxon>Araneae</taxon>
        <taxon>Mygalomorphae</taxon>
        <taxon>Theraphosidae</taxon>
        <taxon>Haplopelma</taxon>
    </lineage>
</organism>
<proteinExistence type="evidence at transcript level"/>
<evidence type="ECO:0000250" key="1"/>
<evidence type="ECO:0000255" key="2"/>
<evidence type="ECO:0000305" key="3"/>
<dbReference type="EMBL" id="GU292986">
    <property type="protein sequence ID" value="ADB56802.1"/>
    <property type="molecule type" value="mRNA"/>
</dbReference>
<dbReference type="SMR" id="D2Y2A9"/>
<dbReference type="ArachnoServer" id="AS001797">
    <property type="toxin name" value="U7-theraphotoxin-Hhn1h"/>
</dbReference>
<dbReference type="GO" id="GO:0005576">
    <property type="term" value="C:extracellular region"/>
    <property type="evidence" value="ECO:0007669"/>
    <property type="project" value="UniProtKB-SubCell"/>
</dbReference>
<dbReference type="GO" id="GO:0008200">
    <property type="term" value="F:ion channel inhibitor activity"/>
    <property type="evidence" value="ECO:0007669"/>
    <property type="project" value="InterPro"/>
</dbReference>
<dbReference type="GO" id="GO:0090729">
    <property type="term" value="F:toxin activity"/>
    <property type="evidence" value="ECO:0007669"/>
    <property type="project" value="UniProtKB-KW"/>
</dbReference>
<dbReference type="InterPro" id="IPR011696">
    <property type="entry name" value="Huwentoxin-1"/>
</dbReference>
<dbReference type="Pfam" id="PF07740">
    <property type="entry name" value="Toxin_12"/>
    <property type="match status" value="1"/>
</dbReference>
<dbReference type="SUPFAM" id="SSF57059">
    <property type="entry name" value="omega toxin-like"/>
    <property type="match status" value="1"/>
</dbReference>
<feature type="signal peptide" evidence="2">
    <location>
        <begin position="1"/>
        <end position="19"/>
    </location>
</feature>
<feature type="propeptide" id="PRO_0000400707" evidence="1">
    <location>
        <begin position="20"/>
        <end position="50"/>
    </location>
</feature>
<feature type="peptide" id="PRO_0000400708" description="U7-theraphotoxin-Hhn1h">
    <location>
        <begin position="51"/>
        <end position="90"/>
    </location>
</feature>
<feature type="disulfide bond" evidence="1">
    <location>
        <begin position="51"/>
        <end position="65"/>
    </location>
</feature>
<feature type="disulfide bond" evidence="1">
    <location>
        <begin position="58"/>
        <end position="70"/>
    </location>
</feature>
<feature type="disulfide bond" evidence="1">
    <location>
        <begin position="64"/>
        <end position="81"/>
    </location>
</feature>
<comment type="function">
    <text evidence="1">Ion channel inhibitor.</text>
</comment>
<comment type="subcellular location">
    <subcellularLocation>
        <location evidence="1">Secreted</location>
    </subcellularLocation>
</comment>
<comment type="tissue specificity">
    <text>Expressed by the venom gland.</text>
</comment>
<comment type="domain">
    <text evidence="1">The presence of a 'disulfide through disulfide knot' structurally defines this protein as a knottin.</text>
</comment>
<comment type="similarity">
    <text evidence="3">Belongs to the neurotoxin 10 (Hwtx-1) family. 13 (Hntx-13) subfamily.</text>
</comment>
<sequence>MKTAIFTVVLALAVFAVLSFGWEANEKALSEEFTELIHEKEAASETEARECRYFWGECHDHMPCCDWLVCRYKWSITYNICVWNRTFPEK</sequence>
<accession>D2Y2A9</accession>
<protein>
    <recommendedName>
        <fullName>U7-theraphotoxin-Hhn1h</fullName>
        <shortName>U7-TRTX-Hhn1h</shortName>
    </recommendedName>
    <alternativeName>
        <fullName>Hainantoxin-XIII-10</fullName>
        <shortName>HNTX-XIII-10</shortName>
    </alternativeName>
</protein>
<reference key="1">
    <citation type="journal article" date="2010" name="J. Proteome Res.">
        <title>Molecular diversification of peptide toxins from the tarantula Haplopelma hainanum (Ornithoctonus hainana) venom based on transcriptomic, peptidomic, and genomic analyses.</title>
        <authorList>
            <person name="Tang X."/>
            <person name="Zhang Y."/>
            <person name="Hu W."/>
            <person name="Xu D."/>
            <person name="Tao H."/>
            <person name="Yang X."/>
            <person name="Li Y."/>
            <person name="Jiang L."/>
            <person name="Liang S."/>
        </authorList>
    </citation>
    <scope>NUCLEOTIDE SEQUENCE [LARGE SCALE MRNA]</scope>
    <source>
        <tissue>Venom gland</tissue>
    </source>
</reference>
<keyword id="KW-1015">Disulfide bond</keyword>
<keyword id="KW-0872">Ion channel impairing toxin</keyword>
<keyword id="KW-0960">Knottin</keyword>
<keyword id="KW-0964">Secreted</keyword>
<keyword id="KW-0732">Signal</keyword>
<keyword id="KW-0800">Toxin</keyword>